<keyword id="KW-0276">Fatty acid metabolism</keyword>
<keyword id="KW-0413">Isomerase</keyword>
<keyword id="KW-0442">Lipid degradation</keyword>
<keyword id="KW-0443">Lipid metabolism</keyword>
<keyword id="KW-0456">Lyase</keyword>
<keyword id="KW-0511">Multifunctional enzyme</keyword>
<keyword id="KW-0520">NAD</keyword>
<keyword id="KW-0560">Oxidoreductase</keyword>
<dbReference type="EC" id="4.2.1.17" evidence="1"/>
<dbReference type="EC" id="5.1.2.3" evidence="1"/>
<dbReference type="EC" id="5.3.3.8" evidence="1"/>
<dbReference type="EC" id="1.1.1.35" evidence="1"/>
<dbReference type="EMBL" id="AE017220">
    <property type="protein sequence ID" value="AAX67786.1"/>
    <property type="status" value="ALT_INIT"/>
    <property type="molecule type" value="Genomic_DNA"/>
</dbReference>
<dbReference type="RefSeq" id="WP_000966001.1">
    <property type="nucleotide sequence ID" value="NC_006905.1"/>
</dbReference>
<dbReference type="SMR" id="Q57HM6"/>
<dbReference type="KEGG" id="sec:SCH_3880"/>
<dbReference type="HOGENOM" id="CLU_009834_16_3_6"/>
<dbReference type="UniPathway" id="UPA00659"/>
<dbReference type="Proteomes" id="UP000000538">
    <property type="component" value="Chromosome"/>
</dbReference>
<dbReference type="GO" id="GO:0036125">
    <property type="term" value="C:fatty acid beta-oxidation multienzyme complex"/>
    <property type="evidence" value="ECO:0007669"/>
    <property type="project" value="InterPro"/>
</dbReference>
<dbReference type="GO" id="GO:0008692">
    <property type="term" value="F:3-hydroxybutyryl-CoA epimerase activity"/>
    <property type="evidence" value="ECO:0007669"/>
    <property type="project" value="UniProtKB-UniRule"/>
</dbReference>
<dbReference type="GO" id="GO:0004165">
    <property type="term" value="F:delta(3)-delta(2)-enoyl-CoA isomerase activity"/>
    <property type="evidence" value="ECO:0007669"/>
    <property type="project" value="UniProtKB-UniRule"/>
</dbReference>
<dbReference type="GO" id="GO:0004300">
    <property type="term" value="F:enoyl-CoA hydratase activity"/>
    <property type="evidence" value="ECO:0007669"/>
    <property type="project" value="UniProtKB-UniRule"/>
</dbReference>
<dbReference type="GO" id="GO:0016509">
    <property type="term" value="F:long-chain-3-hydroxyacyl-CoA dehydrogenase activity"/>
    <property type="evidence" value="ECO:0007669"/>
    <property type="project" value="TreeGrafter"/>
</dbReference>
<dbReference type="GO" id="GO:0070403">
    <property type="term" value="F:NAD+ binding"/>
    <property type="evidence" value="ECO:0007669"/>
    <property type="project" value="InterPro"/>
</dbReference>
<dbReference type="GO" id="GO:0006635">
    <property type="term" value="P:fatty acid beta-oxidation"/>
    <property type="evidence" value="ECO:0007669"/>
    <property type="project" value="UniProtKB-UniRule"/>
</dbReference>
<dbReference type="CDD" id="cd06558">
    <property type="entry name" value="crotonase-like"/>
    <property type="match status" value="1"/>
</dbReference>
<dbReference type="FunFam" id="1.10.1040.50:FF:000001">
    <property type="entry name" value="Fatty acid oxidation complex subunit alpha"/>
    <property type="match status" value="1"/>
</dbReference>
<dbReference type="FunFam" id="3.90.226.10:FF:000018">
    <property type="entry name" value="Fatty acid oxidation complex subunit alpha"/>
    <property type="match status" value="1"/>
</dbReference>
<dbReference type="FunFam" id="3.40.50.720:FF:000009">
    <property type="entry name" value="Fatty oxidation complex, alpha subunit"/>
    <property type="match status" value="1"/>
</dbReference>
<dbReference type="Gene3D" id="1.10.1040.50">
    <property type="match status" value="1"/>
</dbReference>
<dbReference type="Gene3D" id="3.90.226.10">
    <property type="entry name" value="2-enoyl-CoA Hydratase, Chain A, domain 1"/>
    <property type="match status" value="1"/>
</dbReference>
<dbReference type="Gene3D" id="3.40.50.720">
    <property type="entry name" value="NAD(P)-binding Rossmann-like Domain"/>
    <property type="match status" value="1"/>
</dbReference>
<dbReference type="HAMAP" id="MF_01621">
    <property type="entry name" value="FadB"/>
    <property type="match status" value="1"/>
</dbReference>
<dbReference type="InterPro" id="IPR006180">
    <property type="entry name" value="3-OHacyl-CoA_DH_CS"/>
</dbReference>
<dbReference type="InterPro" id="IPR006176">
    <property type="entry name" value="3-OHacyl-CoA_DH_NAD-bd"/>
</dbReference>
<dbReference type="InterPro" id="IPR006108">
    <property type="entry name" value="3HC_DH_C"/>
</dbReference>
<dbReference type="InterPro" id="IPR008927">
    <property type="entry name" value="6-PGluconate_DH-like_C_sf"/>
</dbReference>
<dbReference type="InterPro" id="IPR029045">
    <property type="entry name" value="ClpP/crotonase-like_dom_sf"/>
</dbReference>
<dbReference type="InterPro" id="IPR018376">
    <property type="entry name" value="Enoyl-CoA_hyd/isom_CS"/>
</dbReference>
<dbReference type="InterPro" id="IPR001753">
    <property type="entry name" value="Enoyl-CoA_hydra/iso"/>
</dbReference>
<dbReference type="InterPro" id="IPR050136">
    <property type="entry name" value="FA_oxidation_alpha_subunit"/>
</dbReference>
<dbReference type="InterPro" id="IPR012799">
    <property type="entry name" value="FadB"/>
</dbReference>
<dbReference type="InterPro" id="IPR036291">
    <property type="entry name" value="NAD(P)-bd_dom_sf"/>
</dbReference>
<dbReference type="NCBIfam" id="TIGR02437">
    <property type="entry name" value="FadB"/>
    <property type="match status" value="1"/>
</dbReference>
<dbReference type="NCBIfam" id="NF008727">
    <property type="entry name" value="PRK11730.1"/>
    <property type="match status" value="1"/>
</dbReference>
<dbReference type="PANTHER" id="PTHR43612">
    <property type="entry name" value="TRIFUNCTIONAL ENZYME SUBUNIT ALPHA"/>
    <property type="match status" value="1"/>
</dbReference>
<dbReference type="PANTHER" id="PTHR43612:SF3">
    <property type="entry name" value="TRIFUNCTIONAL ENZYME SUBUNIT ALPHA, MITOCHONDRIAL"/>
    <property type="match status" value="1"/>
</dbReference>
<dbReference type="Pfam" id="PF00725">
    <property type="entry name" value="3HCDH"/>
    <property type="match status" value="2"/>
</dbReference>
<dbReference type="Pfam" id="PF02737">
    <property type="entry name" value="3HCDH_N"/>
    <property type="match status" value="1"/>
</dbReference>
<dbReference type="Pfam" id="PF00378">
    <property type="entry name" value="ECH_1"/>
    <property type="match status" value="1"/>
</dbReference>
<dbReference type="SUPFAM" id="SSF48179">
    <property type="entry name" value="6-phosphogluconate dehydrogenase C-terminal domain-like"/>
    <property type="match status" value="2"/>
</dbReference>
<dbReference type="SUPFAM" id="SSF52096">
    <property type="entry name" value="ClpP/crotonase"/>
    <property type="match status" value="1"/>
</dbReference>
<dbReference type="SUPFAM" id="SSF51735">
    <property type="entry name" value="NAD(P)-binding Rossmann-fold domains"/>
    <property type="match status" value="1"/>
</dbReference>
<dbReference type="PROSITE" id="PS00067">
    <property type="entry name" value="3HCDH"/>
    <property type="match status" value="1"/>
</dbReference>
<dbReference type="PROSITE" id="PS00166">
    <property type="entry name" value="ENOYL_COA_HYDRATASE"/>
    <property type="match status" value="1"/>
</dbReference>
<protein>
    <recommendedName>
        <fullName evidence="1">Fatty acid oxidation complex subunit alpha</fullName>
    </recommendedName>
    <domain>
        <recommendedName>
            <fullName evidence="1">Enoyl-CoA hydratase/Delta(3)-cis-Delta(2)-trans-enoyl-CoA isomerase/3-hydroxybutyryl-CoA epimerase</fullName>
            <ecNumber evidence="1">4.2.1.17</ecNumber>
            <ecNumber evidence="1">5.1.2.3</ecNumber>
            <ecNumber evidence="1">5.3.3.8</ecNumber>
        </recommendedName>
    </domain>
    <domain>
        <recommendedName>
            <fullName evidence="1">3-hydroxyacyl-CoA dehydrogenase</fullName>
            <ecNumber evidence="1">1.1.1.35</ecNumber>
        </recommendedName>
    </domain>
</protein>
<organism>
    <name type="scientific">Salmonella choleraesuis (strain SC-B67)</name>
    <dbReference type="NCBI Taxonomy" id="321314"/>
    <lineage>
        <taxon>Bacteria</taxon>
        <taxon>Pseudomonadati</taxon>
        <taxon>Pseudomonadota</taxon>
        <taxon>Gammaproteobacteria</taxon>
        <taxon>Enterobacterales</taxon>
        <taxon>Enterobacteriaceae</taxon>
        <taxon>Salmonella</taxon>
    </lineage>
</organism>
<name>FADB_SALCH</name>
<reference key="1">
    <citation type="journal article" date="2005" name="Nucleic Acids Res.">
        <title>The genome sequence of Salmonella enterica serovar Choleraesuis, a highly invasive and resistant zoonotic pathogen.</title>
        <authorList>
            <person name="Chiu C.-H."/>
            <person name="Tang P."/>
            <person name="Chu C."/>
            <person name="Hu S."/>
            <person name="Bao Q."/>
            <person name="Yu J."/>
            <person name="Chou Y.-Y."/>
            <person name="Wang H.-S."/>
            <person name="Lee Y.-S."/>
        </authorList>
    </citation>
    <scope>NUCLEOTIDE SEQUENCE [LARGE SCALE GENOMIC DNA]</scope>
    <source>
        <strain>SC-B67</strain>
    </source>
</reference>
<sequence>MLYKGDTLYLDWLEDGIAELVFDAPGSVNKLDTATVASLGQALEVLEKQHDLKGLLLRSNKAAFIVGADITEFLSLFLVPEEQLSQWLHFANSVFNRLEDLPVPTLAAVNGYALGGGCECVLATDYRLATPDLRIGLPETKLGIMPGFGGSVRLPRMLGADSALEIIAAGKDVGAEHALKIGLVDGVVKQEKLIEGAIAVLRQAITGDLDWRAKRQPKLEPLKLSKIEAAMSFTIAKGMVAQTAGKHYPAPMTAVKTIEAAARFGREEALNLENKSFVPLAHTNEARALVGIFLNDQYVKGKAKKLTKDIETPKQAAVLGAGIMGGGIAYQSAWKGVPVIMKDINDKSLNLGMTEAAKLLNKQLERGKIDGLKLAGVISTIHPTLDYAGFDRVDVVVEAVVENPKVKKAVLAETEQKVRPETVLASNTSTIPIGELASALERPENFCGMHFFNPVHRMPLVEIIRGEKSSDETIAKVVAWASKMGKTPIVVNDCPGFFVNRVLFPYFAGFSQLLRDGADFRKVDKVMEKQFGWPMGPAYLLDVVGIDTAHHAQAVMAAGFPQRMQKEYRDAIDALFDASRFGQKNGLGFWRYKEDSKGKPKKEEDAAVDDLLASVSQPKRDFSDDEIIARMMIPMINEVVRCLEEGIIASPAEADMALVYGLGFPPFHGGAFRWLDTQGSAKYLDMAQQYQHLGPLYEVPEGLRNKARHNEPYYPPVEPARPVGSLKTA</sequence>
<comment type="function">
    <text evidence="1">Involved in the aerobic and anaerobic degradation of long-chain fatty acids via beta-oxidation cycle. Catalyzes the formation of 3-oxoacyl-CoA from enoyl-CoA via L-3-hydroxyacyl-CoA. It can also use D-3-hydroxyacyl-CoA and cis-3-enoyl-CoA as substrate.</text>
</comment>
<comment type="catalytic activity">
    <reaction evidence="1">
        <text>a (3S)-3-hydroxyacyl-CoA + NAD(+) = a 3-oxoacyl-CoA + NADH + H(+)</text>
        <dbReference type="Rhea" id="RHEA:22432"/>
        <dbReference type="ChEBI" id="CHEBI:15378"/>
        <dbReference type="ChEBI" id="CHEBI:57318"/>
        <dbReference type="ChEBI" id="CHEBI:57540"/>
        <dbReference type="ChEBI" id="CHEBI:57945"/>
        <dbReference type="ChEBI" id="CHEBI:90726"/>
        <dbReference type="EC" id="1.1.1.35"/>
    </reaction>
</comment>
<comment type="catalytic activity">
    <reaction evidence="1">
        <text>a (3S)-3-hydroxyacyl-CoA = a (2E)-enoyl-CoA + H2O</text>
        <dbReference type="Rhea" id="RHEA:16105"/>
        <dbReference type="ChEBI" id="CHEBI:15377"/>
        <dbReference type="ChEBI" id="CHEBI:57318"/>
        <dbReference type="ChEBI" id="CHEBI:58856"/>
        <dbReference type="EC" id="4.2.1.17"/>
    </reaction>
</comment>
<comment type="catalytic activity">
    <reaction evidence="1">
        <text>a 4-saturated-(3S)-3-hydroxyacyl-CoA = a (3E)-enoyl-CoA + H2O</text>
        <dbReference type="Rhea" id="RHEA:20724"/>
        <dbReference type="ChEBI" id="CHEBI:15377"/>
        <dbReference type="ChEBI" id="CHEBI:58521"/>
        <dbReference type="ChEBI" id="CHEBI:137480"/>
        <dbReference type="EC" id="4.2.1.17"/>
    </reaction>
</comment>
<comment type="catalytic activity">
    <reaction evidence="1">
        <text>(3S)-3-hydroxybutanoyl-CoA = (3R)-3-hydroxybutanoyl-CoA</text>
        <dbReference type="Rhea" id="RHEA:21760"/>
        <dbReference type="ChEBI" id="CHEBI:57315"/>
        <dbReference type="ChEBI" id="CHEBI:57316"/>
        <dbReference type="EC" id="5.1.2.3"/>
    </reaction>
</comment>
<comment type="catalytic activity">
    <reaction evidence="1">
        <text>a (3Z)-enoyl-CoA = a 4-saturated (2E)-enoyl-CoA</text>
        <dbReference type="Rhea" id="RHEA:45900"/>
        <dbReference type="ChEBI" id="CHEBI:85097"/>
        <dbReference type="ChEBI" id="CHEBI:85489"/>
        <dbReference type="EC" id="5.3.3.8"/>
    </reaction>
</comment>
<comment type="catalytic activity">
    <reaction evidence="1">
        <text>a (3E)-enoyl-CoA = a 4-saturated (2E)-enoyl-CoA</text>
        <dbReference type="Rhea" id="RHEA:45228"/>
        <dbReference type="ChEBI" id="CHEBI:58521"/>
        <dbReference type="ChEBI" id="CHEBI:85097"/>
        <dbReference type="EC" id="5.3.3.8"/>
    </reaction>
</comment>
<comment type="pathway">
    <text evidence="1">Lipid metabolism; fatty acid beta-oxidation.</text>
</comment>
<comment type="subunit">
    <text evidence="1">Heterotetramer of two alpha chains (FadB) and two beta chains (FadA).</text>
</comment>
<comment type="similarity">
    <text evidence="1">In the N-terminal section; belongs to the enoyl-CoA hydratase/isomerase family.</text>
</comment>
<comment type="similarity">
    <text evidence="1">In the C-terminal section; belongs to the 3-hydroxyacyl-CoA dehydrogenase family.</text>
</comment>
<comment type="sequence caution" evidence="3">
    <conflict type="erroneous initiation">
        <sequence resource="EMBL-CDS" id="AAX67786"/>
    </conflict>
</comment>
<proteinExistence type="inferred from homology"/>
<accession>Q57HM6</accession>
<gene>
    <name evidence="1" type="primary">fadB</name>
    <name type="ordered locus">SCH_3880</name>
</gene>
<evidence type="ECO:0000255" key="1">
    <source>
        <dbReference type="HAMAP-Rule" id="MF_01621"/>
    </source>
</evidence>
<evidence type="ECO:0000256" key="2">
    <source>
        <dbReference type="SAM" id="MobiDB-lite"/>
    </source>
</evidence>
<evidence type="ECO:0000305" key="3"/>
<feature type="chain" id="PRO_0000109284" description="Fatty acid oxidation complex subunit alpha">
    <location>
        <begin position="1"/>
        <end position="729"/>
    </location>
</feature>
<feature type="region of interest" description="Enoyl-CoA hydratase/isomerase" evidence="1">
    <location>
        <begin position="1"/>
        <end position="189"/>
    </location>
</feature>
<feature type="region of interest" description="3-hydroxyacyl-CoA dehydrogenase" evidence="1">
    <location>
        <begin position="311"/>
        <end position="729"/>
    </location>
</feature>
<feature type="region of interest" description="Disordered" evidence="2">
    <location>
        <begin position="708"/>
        <end position="729"/>
    </location>
</feature>
<feature type="active site" description="For 3-hydroxyacyl-CoA dehydrogenase activity" evidence="1">
    <location>
        <position position="450"/>
    </location>
</feature>
<feature type="binding site" evidence="1">
    <location>
        <position position="296"/>
    </location>
    <ligand>
        <name>substrate</name>
    </ligand>
</feature>
<feature type="binding site" evidence="1">
    <location>
        <position position="324"/>
    </location>
    <ligand>
        <name>NAD(+)</name>
        <dbReference type="ChEBI" id="CHEBI:57540"/>
    </ligand>
</feature>
<feature type="binding site" evidence="1">
    <location>
        <position position="343"/>
    </location>
    <ligand>
        <name>NAD(+)</name>
        <dbReference type="ChEBI" id="CHEBI:57540"/>
    </ligand>
</feature>
<feature type="binding site" evidence="1">
    <location>
        <begin position="400"/>
        <end position="402"/>
    </location>
    <ligand>
        <name>NAD(+)</name>
        <dbReference type="ChEBI" id="CHEBI:57540"/>
    </ligand>
</feature>
<feature type="binding site" evidence="1">
    <location>
        <position position="407"/>
    </location>
    <ligand>
        <name>NAD(+)</name>
        <dbReference type="ChEBI" id="CHEBI:57540"/>
    </ligand>
</feature>
<feature type="binding site" evidence="1">
    <location>
        <position position="429"/>
    </location>
    <ligand>
        <name>NAD(+)</name>
        <dbReference type="ChEBI" id="CHEBI:57540"/>
    </ligand>
</feature>
<feature type="binding site" evidence="1">
    <location>
        <position position="453"/>
    </location>
    <ligand>
        <name>NAD(+)</name>
        <dbReference type="ChEBI" id="CHEBI:57540"/>
    </ligand>
</feature>
<feature type="binding site" evidence="1">
    <location>
        <position position="500"/>
    </location>
    <ligand>
        <name>substrate</name>
    </ligand>
</feature>
<feature type="binding site" evidence="1">
    <location>
        <position position="660"/>
    </location>
    <ligand>
        <name>substrate</name>
    </ligand>
</feature>
<feature type="site" description="Important for catalytic activity" evidence="1">
    <location>
        <position position="119"/>
    </location>
</feature>
<feature type="site" description="Important for catalytic activity" evidence="1">
    <location>
        <position position="139"/>
    </location>
</feature>